<sequence length="558" mass="61933">MSSTTQWENIYHGLDTTPGKLRMSQGGLGWKPSVGEGSTITIPADQMASFQWIRVARNYQLAIYLNKDRDAPSSAQTNPRRTNFDGFVRDDFDRLSSHIRQYFNKPLEAKEVSTRGWNWGQAKISNHDVQFLVRDKLAFELPLSHLANSNIAKTEVSMEFLNPEQQQPGANTGTSDVNGTKSRRSKGDQLVEMRLYVPGQAIKDDGSDAASAQDDDVNNEETAAEAFHEALKSKADIGQVAGDSIVVFKEVLVLTPRGRYDIDVFSTFIRLRGKTYDYKILYSSMNKLFLLPKADEIHVMLVIGLDPPIRQGQTRYPYLVLQFPREEEMDAELNLDEQTIQEKYDGKLKKRYEEPTFRIVTNIFKVLSGQKVATPTDFESSSGQTSIKCNVKAADGNLYPLEKSLLWVSKQPVYVPYSEIHQAILSRVGGAVASSKTFDLRVATKSGTEHTFQSISREELDRLKAWLADRKVRIKNEMAEETGGLAAAAAAGLLSDDDDEEMGAAGGADEDEDSEEDADFAADSDSDGGSPSEASSDEGEGGGYDDEGDERPKKKRKD</sequence>
<keyword id="KW-0158">Chromosome</keyword>
<keyword id="KW-0227">DNA damage</keyword>
<keyword id="KW-0234">DNA repair</keyword>
<keyword id="KW-0235">DNA replication</keyword>
<keyword id="KW-0539">Nucleus</keyword>
<keyword id="KW-1185">Reference proteome</keyword>
<keyword id="KW-0804">Transcription</keyword>
<keyword id="KW-0805">Transcription regulation</keyword>
<accession>Q4P647</accession>
<accession>A0A0D1DXS7</accession>
<evidence type="ECO:0000250" key="1"/>
<evidence type="ECO:0000250" key="2">
    <source>
        <dbReference type="UniProtKB" id="Q04636"/>
    </source>
</evidence>
<evidence type="ECO:0000256" key="3">
    <source>
        <dbReference type="SAM" id="MobiDB-lite"/>
    </source>
</evidence>
<evidence type="ECO:0000305" key="4"/>
<gene>
    <name type="primary">POB3</name>
    <name type="ORF">UMAG_04416</name>
</gene>
<reference key="1">
    <citation type="journal article" date="2006" name="Nature">
        <title>Insights from the genome of the biotrophic fungal plant pathogen Ustilago maydis.</title>
        <authorList>
            <person name="Kaemper J."/>
            <person name="Kahmann R."/>
            <person name="Boelker M."/>
            <person name="Ma L.-J."/>
            <person name="Brefort T."/>
            <person name="Saville B.J."/>
            <person name="Banuett F."/>
            <person name="Kronstad J.W."/>
            <person name="Gold S.E."/>
            <person name="Mueller O."/>
            <person name="Perlin M.H."/>
            <person name="Woesten H.A.B."/>
            <person name="de Vries R."/>
            <person name="Ruiz-Herrera J."/>
            <person name="Reynaga-Pena C.G."/>
            <person name="Snetselaar K."/>
            <person name="McCann M."/>
            <person name="Perez-Martin J."/>
            <person name="Feldbruegge M."/>
            <person name="Basse C.W."/>
            <person name="Steinberg G."/>
            <person name="Ibeas J.I."/>
            <person name="Holloman W."/>
            <person name="Guzman P."/>
            <person name="Farman M.L."/>
            <person name="Stajich J.E."/>
            <person name="Sentandreu R."/>
            <person name="Gonzalez-Prieto J.M."/>
            <person name="Kennell J.C."/>
            <person name="Molina L."/>
            <person name="Schirawski J."/>
            <person name="Mendoza-Mendoza A."/>
            <person name="Greilinger D."/>
            <person name="Muench K."/>
            <person name="Roessel N."/>
            <person name="Scherer M."/>
            <person name="Vranes M."/>
            <person name="Ladendorf O."/>
            <person name="Vincon V."/>
            <person name="Fuchs U."/>
            <person name="Sandrock B."/>
            <person name="Meng S."/>
            <person name="Ho E.C.H."/>
            <person name="Cahill M.J."/>
            <person name="Boyce K.J."/>
            <person name="Klose J."/>
            <person name="Klosterman S.J."/>
            <person name="Deelstra H.J."/>
            <person name="Ortiz-Castellanos L."/>
            <person name="Li W."/>
            <person name="Sanchez-Alonso P."/>
            <person name="Schreier P.H."/>
            <person name="Haeuser-Hahn I."/>
            <person name="Vaupel M."/>
            <person name="Koopmann E."/>
            <person name="Friedrich G."/>
            <person name="Voss H."/>
            <person name="Schlueter T."/>
            <person name="Margolis J."/>
            <person name="Platt D."/>
            <person name="Swimmer C."/>
            <person name="Gnirke A."/>
            <person name="Chen F."/>
            <person name="Vysotskaia V."/>
            <person name="Mannhaupt G."/>
            <person name="Gueldener U."/>
            <person name="Muensterkoetter M."/>
            <person name="Haase D."/>
            <person name="Oesterheld M."/>
            <person name="Mewes H.-W."/>
            <person name="Mauceli E.W."/>
            <person name="DeCaprio D."/>
            <person name="Wade C.M."/>
            <person name="Butler J."/>
            <person name="Young S.K."/>
            <person name="Jaffe D.B."/>
            <person name="Calvo S.E."/>
            <person name="Nusbaum C."/>
            <person name="Galagan J.E."/>
            <person name="Birren B.W."/>
        </authorList>
    </citation>
    <scope>NUCLEOTIDE SEQUENCE [LARGE SCALE GENOMIC DNA]</scope>
    <source>
        <strain>DSM 14603 / FGSC 9021 / UM521</strain>
    </source>
</reference>
<reference key="2">
    <citation type="submission" date="2014-09" db="EMBL/GenBank/DDBJ databases">
        <authorList>
            <person name="Gueldener U."/>
            <person name="Muensterkoetter M."/>
            <person name="Walter M.C."/>
            <person name="Mannhaupt G."/>
            <person name="Kahmann R."/>
        </authorList>
    </citation>
    <scope>GENOME REANNOTATION</scope>
    <source>
        <strain>DSM 14603 / FGSC 9021 / UM521</strain>
    </source>
</reference>
<proteinExistence type="inferred from homology"/>
<dbReference type="EMBL" id="CM003153">
    <property type="protein sequence ID" value="KIS67315.1"/>
    <property type="molecule type" value="Genomic_DNA"/>
</dbReference>
<dbReference type="RefSeq" id="XP_011391110.1">
    <property type="nucleotide sequence ID" value="XM_011392808.1"/>
</dbReference>
<dbReference type="SMR" id="Q4P647"/>
<dbReference type="FunCoup" id="Q4P647">
    <property type="interactions" value="686"/>
</dbReference>
<dbReference type="STRING" id="237631.Q4P647"/>
<dbReference type="EnsemblFungi" id="KIS67315">
    <property type="protein sequence ID" value="KIS67315"/>
    <property type="gene ID" value="UMAG_04416"/>
</dbReference>
<dbReference type="GeneID" id="23564609"/>
<dbReference type="KEGG" id="uma:UMAG_04416"/>
<dbReference type="VEuPathDB" id="FungiDB:UMAG_04416"/>
<dbReference type="eggNOG" id="KOG0526">
    <property type="taxonomic scope" value="Eukaryota"/>
</dbReference>
<dbReference type="HOGENOM" id="CLU_017374_3_0_1"/>
<dbReference type="InParanoid" id="Q4P647"/>
<dbReference type="OMA" id="QVVTKIF"/>
<dbReference type="OrthoDB" id="498543at2759"/>
<dbReference type="Proteomes" id="UP000000561">
    <property type="component" value="Chromosome 14"/>
</dbReference>
<dbReference type="GO" id="GO:0000781">
    <property type="term" value="C:chromosome, telomeric region"/>
    <property type="evidence" value="ECO:0007669"/>
    <property type="project" value="GOC"/>
</dbReference>
<dbReference type="GO" id="GO:0035101">
    <property type="term" value="C:FACT complex"/>
    <property type="evidence" value="ECO:0000318"/>
    <property type="project" value="GO_Central"/>
</dbReference>
<dbReference type="GO" id="GO:0003677">
    <property type="term" value="F:DNA binding"/>
    <property type="evidence" value="ECO:0007669"/>
    <property type="project" value="InterPro"/>
</dbReference>
<dbReference type="GO" id="GO:0042393">
    <property type="term" value="F:histone binding"/>
    <property type="evidence" value="ECO:0000318"/>
    <property type="project" value="GO_Central"/>
</dbReference>
<dbReference type="GO" id="GO:0031491">
    <property type="term" value="F:nucleosome binding"/>
    <property type="evidence" value="ECO:0000318"/>
    <property type="project" value="GO_Central"/>
</dbReference>
<dbReference type="GO" id="GO:0006281">
    <property type="term" value="P:DNA repair"/>
    <property type="evidence" value="ECO:0007669"/>
    <property type="project" value="UniProtKB-KW"/>
</dbReference>
<dbReference type="GO" id="GO:0006335">
    <property type="term" value="P:DNA replication-dependent chromatin assembly"/>
    <property type="evidence" value="ECO:0007669"/>
    <property type="project" value="EnsemblFungi"/>
</dbReference>
<dbReference type="GO" id="GO:0006261">
    <property type="term" value="P:DNA-templated DNA replication"/>
    <property type="evidence" value="ECO:0007669"/>
    <property type="project" value="EnsemblFungi"/>
</dbReference>
<dbReference type="GO" id="GO:0034728">
    <property type="term" value="P:nucleosome organization"/>
    <property type="evidence" value="ECO:0007669"/>
    <property type="project" value="EnsemblFungi"/>
</dbReference>
<dbReference type="GO" id="GO:0031508">
    <property type="term" value="P:pericentric heterochromatin formation"/>
    <property type="evidence" value="ECO:0007669"/>
    <property type="project" value="EnsemblFungi"/>
</dbReference>
<dbReference type="GO" id="GO:0045899">
    <property type="term" value="P:positive regulation of RNA polymerase II transcription preinitiation complex assembly"/>
    <property type="evidence" value="ECO:0007669"/>
    <property type="project" value="EnsemblFungi"/>
</dbReference>
<dbReference type="GO" id="GO:0030466">
    <property type="term" value="P:silent mating-type cassette heterochromatin formation"/>
    <property type="evidence" value="ECO:0007669"/>
    <property type="project" value="EnsemblFungi"/>
</dbReference>
<dbReference type="GO" id="GO:0031509">
    <property type="term" value="P:subtelomeric heterochromatin formation"/>
    <property type="evidence" value="ECO:0007669"/>
    <property type="project" value="EnsemblFungi"/>
</dbReference>
<dbReference type="CDD" id="cd13230">
    <property type="entry name" value="PH1_SSRP1-like"/>
    <property type="match status" value="1"/>
</dbReference>
<dbReference type="CDD" id="cd13231">
    <property type="entry name" value="PH2_SSRP1-like"/>
    <property type="match status" value="1"/>
</dbReference>
<dbReference type="FunFam" id="2.30.29.220:FF:000003">
    <property type="entry name" value="FACT complex subunit POB3"/>
    <property type="match status" value="1"/>
</dbReference>
<dbReference type="FunFam" id="2.30.29.30:FF:000514">
    <property type="entry name" value="FACT complex subunit POB3"/>
    <property type="match status" value="1"/>
</dbReference>
<dbReference type="FunFam" id="2.30.29.30:FF:000528">
    <property type="entry name" value="FACT complex subunit POB3"/>
    <property type="match status" value="1"/>
</dbReference>
<dbReference type="FunFam" id="2.30.29.150:FF:000001">
    <property type="entry name" value="Fact complex subunit ssrp1"/>
    <property type="match status" value="1"/>
</dbReference>
<dbReference type="Gene3D" id="2.30.29.150">
    <property type="match status" value="1"/>
</dbReference>
<dbReference type="Gene3D" id="2.30.29.30">
    <property type="entry name" value="Pleckstrin-homology domain (PH domain)/Phosphotyrosine-binding domain (PTB)"/>
    <property type="match status" value="2"/>
</dbReference>
<dbReference type="Gene3D" id="2.30.29.220">
    <property type="entry name" value="Structure-specific recognition protein (SSRP1)"/>
    <property type="match status" value="1"/>
</dbReference>
<dbReference type="InterPro" id="IPR011993">
    <property type="entry name" value="PH-like_dom_sf"/>
</dbReference>
<dbReference type="InterPro" id="IPR013719">
    <property type="entry name" value="RTT106/SPT16-like_middle_dom"/>
</dbReference>
<dbReference type="InterPro" id="IPR050454">
    <property type="entry name" value="RTT106/SSRP1_HistChap/FACT"/>
</dbReference>
<dbReference type="InterPro" id="IPR048993">
    <property type="entry name" value="SSRP1-like_PH1"/>
</dbReference>
<dbReference type="InterPro" id="IPR000969">
    <property type="entry name" value="SSRP1/POB3"/>
</dbReference>
<dbReference type="InterPro" id="IPR035417">
    <property type="entry name" value="SSRP1/POB3_N"/>
</dbReference>
<dbReference type="InterPro" id="IPR024954">
    <property type="entry name" value="SSRP1_DD"/>
</dbReference>
<dbReference type="InterPro" id="IPR038167">
    <property type="entry name" value="SSRP1_sf"/>
</dbReference>
<dbReference type="PANTHER" id="PTHR45849">
    <property type="entry name" value="FACT COMPLEX SUBUNIT SSRP1"/>
    <property type="match status" value="1"/>
</dbReference>
<dbReference type="PANTHER" id="PTHR45849:SF1">
    <property type="entry name" value="FACT COMPLEX SUBUNIT SSRP1"/>
    <property type="match status" value="1"/>
</dbReference>
<dbReference type="Pfam" id="PF21103">
    <property type="entry name" value="PH1_SSRP1-like"/>
    <property type="match status" value="1"/>
</dbReference>
<dbReference type="Pfam" id="PF17292">
    <property type="entry name" value="POB3_N"/>
    <property type="match status" value="1"/>
</dbReference>
<dbReference type="Pfam" id="PF08512">
    <property type="entry name" value="Rttp106-like_middle"/>
    <property type="match status" value="1"/>
</dbReference>
<dbReference type="Pfam" id="PF03531">
    <property type="entry name" value="SSrecog"/>
    <property type="match status" value="1"/>
</dbReference>
<dbReference type="PRINTS" id="PR00887">
    <property type="entry name" value="SSRCOGNITION"/>
</dbReference>
<dbReference type="SMART" id="SM01287">
    <property type="entry name" value="Rtt106"/>
    <property type="match status" value="1"/>
</dbReference>
<dbReference type="SUPFAM" id="SSF50729">
    <property type="entry name" value="PH domain-like"/>
    <property type="match status" value="1"/>
</dbReference>
<organism>
    <name type="scientific">Mycosarcoma maydis</name>
    <name type="common">Corn smut fungus</name>
    <name type="synonym">Ustilago maydis</name>
    <dbReference type="NCBI Taxonomy" id="5270"/>
    <lineage>
        <taxon>Eukaryota</taxon>
        <taxon>Fungi</taxon>
        <taxon>Dikarya</taxon>
        <taxon>Basidiomycota</taxon>
        <taxon>Ustilaginomycotina</taxon>
        <taxon>Ustilaginomycetes</taxon>
        <taxon>Ustilaginales</taxon>
        <taxon>Ustilaginaceae</taxon>
        <taxon>Mycosarcoma</taxon>
    </lineage>
</organism>
<protein>
    <recommendedName>
        <fullName>FACT complex subunit POB3</fullName>
    </recommendedName>
    <alternativeName>
        <fullName>Facilitates chromatin transcription complex subunit POB3</fullName>
    </alternativeName>
</protein>
<name>POB3_MYCMD</name>
<comment type="function">
    <text evidence="1">Component of the FACT complex, a general chromatin factor that acts to reorganize nucleosomes. The FACT complex is involved in multiple processes that require DNA as a template such as mRNA elongation, DNA replication and DNA repair. During transcription elongation the FACT complex acts as a histone chaperone that both destabilizes and restores nucleosomal structure. It facilitates the passage of RNA polymerase II and transcription by promoting the dissociation of one histone H2A-H2B dimer from the nucleosome, then subsequently promotes the reestablishment of the nucleosome following the passage of RNA polymerase II (By similarity).</text>
</comment>
<comment type="subunit">
    <text evidence="1">Forms a stable heterodimer with SPT16. The SPT16-POB3 dimer weakly associates with multiple molecules of NHP6 to form the FACT complex (By similarity).</text>
</comment>
<comment type="subcellular location">
    <subcellularLocation>
        <location evidence="2">Nucleus</location>
    </subcellularLocation>
    <subcellularLocation>
        <location evidence="2">Chromosome</location>
    </subcellularLocation>
    <text evidence="2">Colocalizes with RNA polymerase II on chromatin. Recruited to actively transcribed loci.</text>
</comment>
<comment type="miscellaneous">
    <text>In contrast to the orthologous protein in animals and plants, this protein does not contain a HMG box DNA-binding domain. This function may instead be provided by the HMG box of the associated NHP6 protein in the FACT complex of fungi.</text>
</comment>
<comment type="similarity">
    <text evidence="4">Belongs to the SSRP1 family.</text>
</comment>
<feature type="chain" id="PRO_0000245211" description="FACT complex subunit POB3">
    <location>
        <begin position="1"/>
        <end position="558"/>
    </location>
</feature>
<feature type="region of interest" description="Disordered" evidence="3">
    <location>
        <begin position="162"/>
        <end position="186"/>
    </location>
</feature>
<feature type="region of interest" description="Disordered" evidence="3">
    <location>
        <begin position="495"/>
        <end position="558"/>
    </location>
</feature>
<feature type="compositionally biased region" description="Polar residues" evidence="3">
    <location>
        <begin position="163"/>
        <end position="180"/>
    </location>
</feature>
<feature type="compositionally biased region" description="Acidic residues" evidence="3">
    <location>
        <begin position="495"/>
        <end position="526"/>
    </location>
</feature>
<feature type="compositionally biased region" description="Acidic residues" evidence="3">
    <location>
        <begin position="535"/>
        <end position="549"/>
    </location>
</feature>